<keyword id="KW-0012">Acyltransferase</keyword>
<keyword id="KW-0045">Antibiotic biosynthesis</keyword>
<keyword id="KW-0808">Transferase</keyword>
<accession>P16540</accession>
<reference key="1">
    <citation type="journal article" date="1989" name="EMBO J.">
        <title>Structure and deduced function of the granaticin-producing polyketide synthase gene cluster of Streptomyces violaceoruber Tu22.</title>
        <authorList>
            <person name="Sherman D.H."/>
            <person name="Malpartida F."/>
            <person name="Bibb M.J."/>
            <person name="Kieser H.M."/>
            <person name="Bibb M.J."/>
            <person name="Hopwood D.A."/>
        </authorList>
    </citation>
    <scope>NUCLEOTIDE SEQUENCE [GENOMIC DNA]</scope>
    <source>
        <strain>Tu22</strain>
    </source>
</reference>
<reference key="2">
    <citation type="journal article" date="1995" name="Mol. Gen. Genet.">
        <title>Identification of Streptomyces violaceoruber Tu22 genes involved in the biosynthesis of granaticin.</title>
        <authorList>
            <person name="Bechthold A."/>
            <person name="Sohng J.K."/>
            <person name="Smith T.M."/>
            <person name="Chu X."/>
            <person name="Floss H.G."/>
        </authorList>
    </citation>
    <scope>NUCLEOTIDE SEQUENCE [GENOMIC DNA]</scope>
    <source>
        <strain>Tu22</strain>
    </source>
</reference>
<reference key="3">
    <citation type="journal article" date="1998" name="Chem. Biol.">
        <title>The granaticin biosynthetic gene cluster of Streptomyces violaceoruber Tu22: sequence analysis and expression in a heterologous host.</title>
        <authorList>
            <person name="Ichinose K."/>
            <person name="Bedford D.J."/>
            <person name="Tornus D."/>
            <person name="Bechthold A."/>
            <person name="Bibb M.J."/>
            <person name="Revill W.P."/>
            <person name="Floss H.G."/>
            <person name="Hopwood D.A."/>
        </authorList>
    </citation>
    <scope>NUCLEOTIDE SEQUENCE [GENOMIC DNA]</scope>
    <source>
        <strain>Tu22</strain>
    </source>
</reference>
<dbReference type="EC" id="2.3.1.-"/>
<dbReference type="EMBL" id="X16300">
    <property type="protein sequence ID" value="CAA34369.1"/>
    <property type="molecule type" value="Genomic_DNA"/>
</dbReference>
<dbReference type="EMBL" id="X16144">
    <property type="protein sequence ID" value="CAA34264.1"/>
    <property type="molecule type" value="Genomic_DNA"/>
</dbReference>
<dbReference type="EMBL" id="AJ011500">
    <property type="protein sequence ID" value="CAA09653.1"/>
    <property type="molecule type" value="Genomic_DNA"/>
</dbReference>
<dbReference type="PIR" id="S05393">
    <property type="entry name" value="S05393"/>
</dbReference>
<dbReference type="SMR" id="P16540"/>
<dbReference type="UniPathway" id="UPA00175"/>
<dbReference type="GO" id="GO:0005829">
    <property type="term" value="C:cytosol"/>
    <property type="evidence" value="ECO:0007669"/>
    <property type="project" value="TreeGrafter"/>
</dbReference>
<dbReference type="GO" id="GO:0004315">
    <property type="term" value="F:3-oxoacyl-[acyl-carrier-protein] synthase activity"/>
    <property type="evidence" value="ECO:0007669"/>
    <property type="project" value="InterPro"/>
</dbReference>
<dbReference type="GO" id="GO:0017000">
    <property type="term" value="P:antibiotic biosynthetic process"/>
    <property type="evidence" value="ECO:0007669"/>
    <property type="project" value="UniProtKB-KW"/>
</dbReference>
<dbReference type="GO" id="GO:0006633">
    <property type="term" value="P:fatty acid biosynthetic process"/>
    <property type="evidence" value="ECO:0007669"/>
    <property type="project" value="InterPro"/>
</dbReference>
<dbReference type="CDD" id="cd00834">
    <property type="entry name" value="KAS_I_II"/>
    <property type="match status" value="1"/>
</dbReference>
<dbReference type="FunFam" id="3.40.47.10:FF:000029">
    <property type="entry name" value="3-oxoacyl-[acyl-carrier-protein] synthase 1"/>
    <property type="match status" value="1"/>
</dbReference>
<dbReference type="FunFam" id="3.40.47.10:FF:000018">
    <property type="entry name" value="3-oxoacyl-[acyl-carrier-protein] synthase 2"/>
    <property type="match status" value="1"/>
</dbReference>
<dbReference type="Gene3D" id="3.40.47.10">
    <property type="match status" value="2"/>
</dbReference>
<dbReference type="InterPro" id="IPR000794">
    <property type="entry name" value="Beta-ketoacyl_synthase"/>
</dbReference>
<dbReference type="InterPro" id="IPR018201">
    <property type="entry name" value="Ketoacyl_synth_AS"/>
</dbReference>
<dbReference type="InterPro" id="IPR014031">
    <property type="entry name" value="Ketoacyl_synth_C"/>
</dbReference>
<dbReference type="InterPro" id="IPR014030">
    <property type="entry name" value="Ketoacyl_synth_N"/>
</dbReference>
<dbReference type="InterPro" id="IPR020841">
    <property type="entry name" value="PKS_Beta-ketoAc_synthase_dom"/>
</dbReference>
<dbReference type="InterPro" id="IPR016039">
    <property type="entry name" value="Thiolase-like"/>
</dbReference>
<dbReference type="NCBIfam" id="NF005589">
    <property type="entry name" value="PRK07314.1"/>
    <property type="match status" value="1"/>
</dbReference>
<dbReference type="PANTHER" id="PTHR11712:SF336">
    <property type="entry name" value="3-OXOACYL-[ACYL-CARRIER-PROTEIN] SYNTHASE, MITOCHONDRIAL"/>
    <property type="match status" value="1"/>
</dbReference>
<dbReference type="PANTHER" id="PTHR11712">
    <property type="entry name" value="POLYKETIDE SYNTHASE-RELATED"/>
    <property type="match status" value="1"/>
</dbReference>
<dbReference type="Pfam" id="PF00109">
    <property type="entry name" value="ketoacyl-synt"/>
    <property type="match status" value="1"/>
</dbReference>
<dbReference type="Pfam" id="PF02801">
    <property type="entry name" value="Ketoacyl-synt_C"/>
    <property type="match status" value="1"/>
</dbReference>
<dbReference type="SMART" id="SM00825">
    <property type="entry name" value="PKS_KS"/>
    <property type="match status" value="1"/>
</dbReference>
<dbReference type="SUPFAM" id="SSF53901">
    <property type="entry name" value="Thiolase-like"/>
    <property type="match status" value="2"/>
</dbReference>
<dbReference type="PROSITE" id="PS00606">
    <property type="entry name" value="KS3_1"/>
    <property type="match status" value="1"/>
</dbReference>
<dbReference type="PROSITE" id="PS52004">
    <property type="entry name" value="KS3_2"/>
    <property type="match status" value="1"/>
</dbReference>
<proteinExistence type="inferred from homology"/>
<sequence length="421" mass="44393">MTRRVVITGVGVRAPGGSGTKEFWDLLTAGRTATRPISFFDASPFRSRIAGEIDFDAVAEGFSPREVRRMDRATQFAVACTRDALADSGLDTGALDPSRIGVALGSAVASATSLENEYLVMSDSGREWLVDPAHLSPMMFDYLSPGVMPAEVAWAAGAEGPVTMVSDGCTSGLDSVGYAVQGTREGSADVVVAGAADTPVSPIVVACFDAIKATTPRNDDPAHASRPFDGTRNGFVLAEGAAMFVLEEYEAAQRRGAHIYAEVGGYATRSQAYHMTGLKKDGREMAESIRAALDEARLDRTAVDYVNAHGSGTKQNDRHETAAFKRSLGEHAYAVPVSSIKSMGGHSLGAIGSIEIAASVLAIEHNVVPPTANLHTPDPECDLDYVPLTAREQRVDTVLTVGSGFGGFQSAMVLHRPEEAA</sequence>
<comment type="pathway">
    <text>Antibiotic biosynthesis; granaticin biosynthesis.</text>
</comment>
<comment type="similarity">
    <text evidence="2">Belongs to the thiolase-like superfamily. Beta-ketoacyl-ACP synthases family.</text>
</comment>
<protein>
    <recommendedName>
        <fullName>Granaticin polyketide putative beta-ketoacyl synthase 1</fullName>
        <ecNumber>2.3.1.-</ecNumber>
    </recommendedName>
    <alternativeName>
        <fullName>ORF1</fullName>
    </alternativeName>
</protein>
<feature type="chain" id="PRO_0000180340" description="Granaticin polyketide putative beta-ketoacyl synthase 1">
    <location>
        <begin position="1"/>
        <end position="421"/>
    </location>
</feature>
<feature type="domain" description="Ketosynthase family 3 (KS3)" evidence="1">
    <location>
        <begin position="2"/>
        <end position="416"/>
    </location>
</feature>
<feature type="active site" description="For beta-ketoacyl synthase activity" evidence="1">
    <location>
        <position position="169"/>
    </location>
</feature>
<feature type="active site" description="For beta-ketoacyl synthase activity" evidence="1">
    <location>
        <position position="309"/>
    </location>
</feature>
<feature type="active site" description="For beta-ketoacyl synthase activity" evidence="1">
    <location>
        <position position="346"/>
    </location>
</feature>
<name>KAS1_STRVN</name>
<evidence type="ECO:0000255" key="1">
    <source>
        <dbReference type="PROSITE-ProRule" id="PRU01348"/>
    </source>
</evidence>
<evidence type="ECO:0000305" key="2"/>
<gene>
    <name type="primary">gra-orf1</name>
</gene>
<organism>
    <name type="scientific">Streptomyces violaceoruber</name>
    <dbReference type="NCBI Taxonomy" id="1935"/>
    <lineage>
        <taxon>Bacteria</taxon>
        <taxon>Bacillati</taxon>
        <taxon>Actinomycetota</taxon>
        <taxon>Actinomycetes</taxon>
        <taxon>Kitasatosporales</taxon>
        <taxon>Streptomycetaceae</taxon>
        <taxon>Streptomyces</taxon>
        <taxon>Streptomyces violaceoruber group</taxon>
    </lineage>
</organism>